<reference key="1">
    <citation type="journal article" date="2003" name="Proc. Natl. Acad. Sci. U.S.A.">
        <title>Complete genome sequence of Lactobacillus plantarum WCFS1.</title>
        <authorList>
            <person name="Kleerebezem M."/>
            <person name="Boekhorst J."/>
            <person name="van Kranenburg R."/>
            <person name="Molenaar D."/>
            <person name="Kuipers O.P."/>
            <person name="Leer R."/>
            <person name="Tarchini R."/>
            <person name="Peters S.A."/>
            <person name="Sandbrink H.M."/>
            <person name="Fiers M.W.E.J."/>
            <person name="Stiekema W."/>
            <person name="Klein Lankhorst R.M."/>
            <person name="Bron P.A."/>
            <person name="Hoffer S.M."/>
            <person name="Nierop Groot M.N."/>
            <person name="Kerkhoven R."/>
            <person name="De Vries M."/>
            <person name="Ursing B."/>
            <person name="De Vos W.M."/>
            <person name="Siezen R.J."/>
        </authorList>
    </citation>
    <scope>NUCLEOTIDE SEQUENCE [LARGE SCALE GENOMIC DNA]</scope>
    <source>
        <strain>ATCC BAA-793 / NCIMB 8826 / WCFS1</strain>
    </source>
</reference>
<reference key="2">
    <citation type="journal article" date="2012" name="J. Bacteriol.">
        <title>Complete resequencing and reannotation of the Lactobacillus plantarum WCFS1 genome.</title>
        <authorList>
            <person name="Siezen R.J."/>
            <person name="Francke C."/>
            <person name="Renckens B."/>
            <person name="Boekhorst J."/>
            <person name="Wels M."/>
            <person name="Kleerebezem M."/>
            <person name="van Hijum S.A."/>
        </authorList>
    </citation>
    <scope>NUCLEOTIDE SEQUENCE [LARGE SCALE GENOMIC DNA]</scope>
    <scope>GENOME REANNOTATION</scope>
    <source>
        <strain>ATCC BAA-793 / NCIMB 8826 / WCFS1</strain>
    </source>
</reference>
<gene>
    <name evidence="1" type="primary">citG</name>
    <name type="ordered locus">lp_1093</name>
</gene>
<evidence type="ECO:0000255" key="1">
    <source>
        <dbReference type="HAMAP-Rule" id="MF_00397"/>
    </source>
</evidence>
<dbReference type="EC" id="2.4.2.52" evidence="1"/>
<dbReference type="EMBL" id="AL935263">
    <property type="protein sequence ID" value="CCC78497.1"/>
    <property type="molecule type" value="Genomic_DNA"/>
</dbReference>
<dbReference type="RefSeq" id="WP_011101256.1">
    <property type="nucleotide sequence ID" value="NC_004567.2"/>
</dbReference>
<dbReference type="RefSeq" id="YP_004889011.1">
    <property type="nucleotide sequence ID" value="NC_004567.2"/>
</dbReference>
<dbReference type="STRING" id="220668.lp_1093"/>
<dbReference type="EnsemblBacteria" id="CCC78497">
    <property type="protein sequence ID" value="CCC78497"/>
    <property type="gene ID" value="lp_1093"/>
</dbReference>
<dbReference type="KEGG" id="lpl:lp_1093"/>
<dbReference type="PATRIC" id="fig|220668.9.peg.926"/>
<dbReference type="eggNOG" id="COG1767">
    <property type="taxonomic scope" value="Bacteria"/>
</dbReference>
<dbReference type="HOGENOM" id="CLU_056179_1_0_9"/>
<dbReference type="OrthoDB" id="114886at2"/>
<dbReference type="PhylomeDB" id="Q88XT4"/>
<dbReference type="Proteomes" id="UP000000432">
    <property type="component" value="Chromosome"/>
</dbReference>
<dbReference type="GO" id="GO:0005524">
    <property type="term" value="F:ATP binding"/>
    <property type="evidence" value="ECO:0007669"/>
    <property type="project" value="UniProtKB-KW"/>
</dbReference>
<dbReference type="GO" id="GO:0046917">
    <property type="term" value="F:triphosphoribosyl-dephospho-CoA synthase activity"/>
    <property type="evidence" value="ECO:0007669"/>
    <property type="project" value="UniProtKB-UniRule"/>
</dbReference>
<dbReference type="GO" id="GO:0051191">
    <property type="term" value="P:prosthetic group biosynthetic process"/>
    <property type="evidence" value="ECO:0007669"/>
    <property type="project" value="TreeGrafter"/>
</dbReference>
<dbReference type="Gene3D" id="1.10.4200.10">
    <property type="entry name" value="Triphosphoribosyl-dephospho-CoA protein"/>
    <property type="match status" value="1"/>
</dbReference>
<dbReference type="HAMAP" id="MF_00397">
    <property type="entry name" value="CitG"/>
    <property type="match status" value="1"/>
</dbReference>
<dbReference type="InterPro" id="IPR002736">
    <property type="entry name" value="CitG"/>
</dbReference>
<dbReference type="InterPro" id="IPR017551">
    <property type="entry name" value="TriPribosyl-deP-CoA_syn_CitG"/>
</dbReference>
<dbReference type="NCBIfam" id="TIGR03125">
    <property type="entry name" value="citrate_citG"/>
    <property type="match status" value="1"/>
</dbReference>
<dbReference type="NCBIfam" id="NF002315">
    <property type="entry name" value="PRK01237.1"/>
    <property type="match status" value="1"/>
</dbReference>
<dbReference type="PANTHER" id="PTHR30201:SF2">
    <property type="entry name" value="2-(5''-TRIPHOSPHORIBOSYL)-3'-DEPHOSPHOCOENZYME-A SYNTHASE"/>
    <property type="match status" value="1"/>
</dbReference>
<dbReference type="PANTHER" id="PTHR30201">
    <property type="entry name" value="TRIPHOSPHORIBOSYL-DEPHOSPHO-COA SYNTHASE"/>
    <property type="match status" value="1"/>
</dbReference>
<dbReference type="Pfam" id="PF01874">
    <property type="entry name" value="CitG"/>
    <property type="match status" value="1"/>
</dbReference>
<comment type="catalytic activity">
    <reaction evidence="1">
        <text>3'-dephospho-CoA + ATP = 2'-(5''-triphospho-alpha-D-ribosyl)-3'-dephospho-CoA + adenine</text>
        <dbReference type="Rhea" id="RHEA:15117"/>
        <dbReference type="ChEBI" id="CHEBI:16708"/>
        <dbReference type="ChEBI" id="CHEBI:30616"/>
        <dbReference type="ChEBI" id="CHEBI:57328"/>
        <dbReference type="ChEBI" id="CHEBI:61378"/>
        <dbReference type="EC" id="2.4.2.52"/>
    </reaction>
</comment>
<comment type="similarity">
    <text evidence="1">Belongs to the CitG/MdcB family.</text>
</comment>
<sequence length="280" mass="30279">MDTKIIVNHALRALLYEVTVNPKPGLVDPLSAGPHPDMNAFMFIDSALSLAPYFNACAAAGVAYTAVDLTGLFKQIRGIGVQAEQTMFAATKGVNTHKGAVFSLGVLVTAAAYQLQHPDVDLATIVRTMLAGLTANDFNDLNTKDPTTLTAGERQYLTYGIKGIRGEAEAGYPTVMQVALPALRRSRGTINQRLLDTLMAIVQATVDTNLVKRAHDPHVIDWVHDQAHRYFDLGGSRSEAGMAFLRELNQIFVDHNYSLGGSADLLILTIFIGLQTDILA</sequence>
<keyword id="KW-0067">ATP-binding</keyword>
<keyword id="KW-0547">Nucleotide-binding</keyword>
<keyword id="KW-1185">Reference proteome</keyword>
<keyword id="KW-0808">Transferase</keyword>
<accession>Q88XT4</accession>
<accession>F9UMQ8</accession>
<proteinExistence type="inferred from homology"/>
<organism>
    <name type="scientific">Lactiplantibacillus plantarum (strain ATCC BAA-793 / NCIMB 8826 / WCFS1)</name>
    <name type="common">Lactobacillus plantarum</name>
    <dbReference type="NCBI Taxonomy" id="220668"/>
    <lineage>
        <taxon>Bacteria</taxon>
        <taxon>Bacillati</taxon>
        <taxon>Bacillota</taxon>
        <taxon>Bacilli</taxon>
        <taxon>Lactobacillales</taxon>
        <taxon>Lactobacillaceae</taxon>
        <taxon>Lactiplantibacillus</taxon>
    </lineage>
</organism>
<protein>
    <recommendedName>
        <fullName evidence="1">Probable 2-(5''-triphosphoribosyl)-3'-dephosphocoenzyme-A synthase</fullName>
        <shortName evidence="1">2-(5''-triphosphoribosyl)-3'-dephospho-CoA synthase</shortName>
        <ecNumber evidence="1">2.4.2.52</ecNumber>
    </recommendedName>
</protein>
<name>CITG_LACPL</name>
<feature type="chain" id="PRO_0000214675" description="Probable 2-(5''-triphosphoribosyl)-3'-dephosphocoenzyme-A synthase">
    <location>
        <begin position="1"/>
        <end position="280"/>
    </location>
</feature>